<proteinExistence type="inferred from homology"/>
<comment type="function">
    <text evidence="2">This protein is a component of the acetyl coenzyme A carboxylase complex; first, biotin carboxylase catalyzes the carboxylation of the carrier protein and then the transcarboxylase transfers the carboxyl group to form malonyl-CoA.</text>
</comment>
<comment type="catalytic activity">
    <reaction evidence="2">
        <text>N(6)-biotinyl-L-lysyl-[protein] + hydrogencarbonate + ATP = N(6)-carboxybiotinyl-L-lysyl-[protein] + ADP + phosphate + H(+)</text>
        <dbReference type="Rhea" id="RHEA:13501"/>
        <dbReference type="Rhea" id="RHEA-COMP:10505"/>
        <dbReference type="Rhea" id="RHEA-COMP:10506"/>
        <dbReference type="ChEBI" id="CHEBI:15378"/>
        <dbReference type="ChEBI" id="CHEBI:17544"/>
        <dbReference type="ChEBI" id="CHEBI:30616"/>
        <dbReference type="ChEBI" id="CHEBI:43474"/>
        <dbReference type="ChEBI" id="CHEBI:83144"/>
        <dbReference type="ChEBI" id="CHEBI:83145"/>
        <dbReference type="ChEBI" id="CHEBI:456216"/>
        <dbReference type="EC" id="6.3.4.14"/>
    </reaction>
</comment>
<comment type="cofactor">
    <cofactor evidence="5">
        <name>Mg(2+)</name>
        <dbReference type="ChEBI" id="CHEBI:18420"/>
    </cofactor>
    <cofactor evidence="5">
        <name>Mn(2+)</name>
        <dbReference type="ChEBI" id="CHEBI:29035"/>
    </cofactor>
    <text evidence="5">Binds 2 magnesium or manganese ions per subunit.</text>
</comment>
<comment type="pathway">
    <text>Lipid metabolism; malonyl-CoA biosynthesis; malonyl-CoA from acetyl-CoA: step 1/1.</text>
</comment>
<comment type="subunit">
    <text evidence="1">Acetyl-CoA carboxylase is a heterohexamer of biotin carboxyl carrier protein, biotin carboxylase and the two subunits of carboxyl transferase in a 2:2 complex.</text>
</comment>
<gene>
    <name type="primary">accC</name>
    <name type="ordered locus">Alvin_1906</name>
</gene>
<sequence>MSAMIEKVLIANRGEIALRILRACRELGIKTVAVHSEADRDLKHVLLADESVCIGPAPAMQSYLNVPAIISAAEVTDTVAIHPGYGFLSENADFAERVEKSGFIFIGPRPETIRLMGDKVSAIAAMKAAGVPCVPGSDGPIDDNKKRTLELAREIGYPIMIKSSGGGGGRGMRVVHSEATLLNAIALTRAEAAAAFNNDMVYMEKYLENPRHIEFQVLADQMGNAIHLGERDCSMQRRHQKVVEEAPAPGITEEQRREIGERCAAACRSIGYRGAGTFEFLYENGQFYFIEMNTRVQVEHPVTEMVTGVDIVKEQILIAAGEPLRYRQSDIQMRGHAIECRINAEHPETFMPSPGKITDFHAPGGPGVRIETHIYSGYTVPCHYDSMIGKLITHGEDRESAVARMCNALRETVIEGIHSNIKLQRSIMRDGAFLAGGANIHYLEKMLGL</sequence>
<keyword id="KW-0067">ATP-binding</keyword>
<keyword id="KW-0092">Biotin</keyword>
<keyword id="KW-0275">Fatty acid biosynthesis</keyword>
<keyword id="KW-0276">Fatty acid metabolism</keyword>
<keyword id="KW-0436">Ligase</keyword>
<keyword id="KW-0444">Lipid biosynthesis</keyword>
<keyword id="KW-0443">Lipid metabolism</keyword>
<keyword id="KW-0460">Magnesium</keyword>
<keyword id="KW-0464">Manganese</keyword>
<keyword id="KW-0479">Metal-binding</keyword>
<keyword id="KW-0547">Nucleotide-binding</keyword>
<keyword id="KW-1185">Reference proteome</keyword>
<dbReference type="EC" id="6.3.4.14" evidence="2"/>
<dbReference type="EMBL" id="CP001896">
    <property type="protein sequence ID" value="ADC62830.1"/>
    <property type="molecule type" value="Genomic_DNA"/>
</dbReference>
<dbReference type="EMBL" id="AF017119">
    <property type="protein sequence ID" value="AAB91545.1"/>
    <property type="molecule type" value="Genomic_DNA"/>
</dbReference>
<dbReference type="SMR" id="O52058"/>
<dbReference type="STRING" id="572477.Alvin_1906"/>
<dbReference type="KEGG" id="alv:Alvin_1906"/>
<dbReference type="eggNOG" id="COG0439">
    <property type="taxonomic scope" value="Bacteria"/>
</dbReference>
<dbReference type="HOGENOM" id="CLU_000395_3_2_6"/>
<dbReference type="UniPathway" id="UPA00655">
    <property type="reaction ID" value="UER00711"/>
</dbReference>
<dbReference type="Proteomes" id="UP000001441">
    <property type="component" value="Chromosome"/>
</dbReference>
<dbReference type="GO" id="GO:0003989">
    <property type="term" value="F:acetyl-CoA carboxylase activity"/>
    <property type="evidence" value="ECO:0007669"/>
    <property type="project" value="UniProtKB-EC"/>
</dbReference>
<dbReference type="GO" id="GO:0005524">
    <property type="term" value="F:ATP binding"/>
    <property type="evidence" value="ECO:0007669"/>
    <property type="project" value="UniProtKB-KW"/>
</dbReference>
<dbReference type="GO" id="GO:0004075">
    <property type="term" value="F:biotin carboxylase activity"/>
    <property type="evidence" value="ECO:0007669"/>
    <property type="project" value="UniProtKB-EC"/>
</dbReference>
<dbReference type="GO" id="GO:0046872">
    <property type="term" value="F:metal ion binding"/>
    <property type="evidence" value="ECO:0007669"/>
    <property type="project" value="UniProtKB-KW"/>
</dbReference>
<dbReference type="GO" id="GO:0006633">
    <property type="term" value="P:fatty acid biosynthetic process"/>
    <property type="evidence" value="ECO:0007669"/>
    <property type="project" value="UniProtKB-KW"/>
</dbReference>
<dbReference type="GO" id="GO:2001295">
    <property type="term" value="P:malonyl-CoA biosynthetic process"/>
    <property type="evidence" value="ECO:0007669"/>
    <property type="project" value="UniProtKB-UniPathway"/>
</dbReference>
<dbReference type="FunFam" id="3.30.1490.20:FF:000003">
    <property type="entry name" value="acetyl-CoA carboxylase isoform X1"/>
    <property type="match status" value="1"/>
</dbReference>
<dbReference type="FunFam" id="3.40.50.20:FF:000010">
    <property type="entry name" value="Propionyl-CoA carboxylase subunit alpha"/>
    <property type="match status" value="1"/>
</dbReference>
<dbReference type="Gene3D" id="3.40.50.20">
    <property type="match status" value="1"/>
</dbReference>
<dbReference type="Gene3D" id="3.30.1490.20">
    <property type="entry name" value="ATP-grasp fold, A domain"/>
    <property type="match status" value="1"/>
</dbReference>
<dbReference type="Gene3D" id="3.30.470.20">
    <property type="entry name" value="ATP-grasp fold, B domain"/>
    <property type="match status" value="1"/>
</dbReference>
<dbReference type="InterPro" id="IPR051602">
    <property type="entry name" value="ACC_Biotin_Carboxylase"/>
</dbReference>
<dbReference type="InterPro" id="IPR004549">
    <property type="entry name" value="Acetyl_CoA_COase_biotin_COase"/>
</dbReference>
<dbReference type="InterPro" id="IPR011761">
    <property type="entry name" value="ATP-grasp"/>
</dbReference>
<dbReference type="InterPro" id="IPR013815">
    <property type="entry name" value="ATP_grasp_subdomain_1"/>
</dbReference>
<dbReference type="InterPro" id="IPR005481">
    <property type="entry name" value="BC-like_N"/>
</dbReference>
<dbReference type="InterPro" id="IPR011764">
    <property type="entry name" value="Biotin_carboxylation_dom"/>
</dbReference>
<dbReference type="InterPro" id="IPR005482">
    <property type="entry name" value="Biotin_COase_C"/>
</dbReference>
<dbReference type="InterPro" id="IPR005479">
    <property type="entry name" value="CbamoylP_synth_lsu-like_ATP-bd"/>
</dbReference>
<dbReference type="InterPro" id="IPR016185">
    <property type="entry name" value="PreATP-grasp_dom_sf"/>
</dbReference>
<dbReference type="InterPro" id="IPR011054">
    <property type="entry name" value="Rudment_hybrid_motif"/>
</dbReference>
<dbReference type="NCBIfam" id="TIGR00514">
    <property type="entry name" value="accC"/>
    <property type="match status" value="1"/>
</dbReference>
<dbReference type="NCBIfam" id="NF006367">
    <property type="entry name" value="PRK08591.1"/>
    <property type="match status" value="1"/>
</dbReference>
<dbReference type="PANTHER" id="PTHR48095:SF2">
    <property type="entry name" value="BIOTIN CARBOXYLASE, CHLOROPLASTIC"/>
    <property type="match status" value="1"/>
</dbReference>
<dbReference type="PANTHER" id="PTHR48095">
    <property type="entry name" value="PYRUVATE CARBOXYLASE SUBUNIT A"/>
    <property type="match status" value="1"/>
</dbReference>
<dbReference type="Pfam" id="PF02785">
    <property type="entry name" value="Biotin_carb_C"/>
    <property type="match status" value="1"/>
</dbReference>
<dbReference type="Pfam" id="PF00289">
    <property type="entry name" value="Biotin_carb_N"/>
    <property type="match status" value="1"/>
</dbReference>
<dbReference type="Pfam" id="PF02786">
    <property type="entry name" value="CPSase_L_D2"/>
    <property type="match status" value="1"/>
</dbReference>
<dbReference type="SMART" id="SM00878">
    <property type="entry name" value="Biotin_carb_C"/>
    <property type="match status" value="1"/>
</dbReference>
<dbReference type="SUPFAM" id="SSF56059">
    <property type="entry name" value="Glutathione synthetase ATP-binding domain-like"/>
    <property type="match status" value="1"/>
</dbReference>
<dbReference type="SUPFAM" id="SSF52440">
    <property type="entry name" value="PreATP-grasp domain"/>
    <property type="match status" value="1"/>
</dbReference>
<dbReference type="SUPFAM" id="SSF51246">
    <property type="entry name" value="Rudiment single hybrid motif"/>
    <property type="match status" value="1"/>
</dbReference>
<dbReference type="PROSITE" id="PS50975">
    <property type="entry name" value="ATP_GRASP"/>
    <property type="match status" value="1"/>
</dbReference>
<dbReference type="PROSITE" id="PS50979">
    <property type="entry name" value="BC"/>
    <property type="match status" value="1"/>
</dbReference>
<dbReference type="PROSITE" id="PS00866">
    <property type="entry name" value="CPSASE_1"/>
    <property type="match status" value="1"/>
</dbReference>
<dbReference type="PROSITE" id="PS00867">
    <property type="entry name" value="CPSASE_2"/>
    <property type="match status" value="1"/>
</dbReference>
<evidence type="ECO:0000250" key="1"/>
<evidence type="ECO:0000250" key="2">
    <source>
        <dbReference type="UniProtKB" id="O04983"/>
    </source>
</evidence>
<evidence type="ECO:0000250" key="3">
    <source>
        <dbReference type="UniProtKB" id="P24182"/>
    </source>
</evidence>
<evidence type="ECO:0000255" key="4">
    <source>
        <dbReference type="PROSITE-ProRule" id="PRU00409"/>
    </source>
</evidence>
<evidence type="ECO:0000255" key="5">
    <source>
        <dbReference type="PROSITE-ProRule" id="PRU00969"/>
    </source>
</evidence>
<evidence type="ECO:0000305" key="6"/>
<reference key="1">
    <citation type="journal article" date="2011" name="Stand. Genomic Sci.">
        <title>Complete genome sequence of Allochromatium vinosum DSM 180(T).</title>
        <authorList>
            <person name="Weissgerber T."/>
            <person name="Zigann R."/>
            <person name="Bruce D."/>
            <person name="Chang Y.J."/>
            <person name="Detter J.C."/>
            <person name="Han C."/>
            <person name="Hauser L."/>
            <person name="Jeffries C.D."/>
            <person name="Land M."/>
            <person name="Munk A.C."/>
            <person name="Tapia R."/>
            <person name="Dahl C."/>
        </authorList>
    </citation>
    <scope>NUCLEOTIDE SEQUENCE [LARGE SCALE GENOMIC DNA]</scope>
    <source>
        <strain>ATCC 17899 / DSM 180 / NBRC 103801 / NCIMB 10441 / D</strain>
    </source>
</reference>
<reference key="2">
    <citation type="journal article" date="1998" name="Arch. Microbiol.">
        <title>Molecular genetic evidence for extracytoplasmic localization of sulfur globules in Chromatium vinosum.</title>
        <authorList>
            <person name="Pattaragulwanit K."/>
            <person name="Brune D.C."/>
            <person name="Trueper H.G."/>
            <person name="Dahl C."/>
        </authorList>
    </citation>
    <scope>NUCLEOTIDE SEQUENCE [GENOMIC DNA] OF 309-449</scope>
</reference>
<organism>
    <name type="scientific">Allochromatium vinosum (strain ATCC 17899 / DSM 180 / NBRC 103801 / NCIMB 10441 / D)</name>
    <name type="common">Chromatium vinosum</name>
    <dbReference type="NCBI Taxonomy" id="572477"/>
    <lineage>
        <taxon>Bacteria</taxon>
        <taxon>Pseudomonadati</taxon>
        <taxon>Pseudomonadota</taxon>
        <taxon>Gammaproteobacteria</taxon>
        <taxon>Chromatiales</taxon>
        <taxon>Chromatiaceae</taxon>
        <taxon>Allochromatium</taxon>
    </lineage>
</organism>
<name>ACCC_ALLVD</name>
<protein>
    <recommendedName>
        <fullName>Biotin carboxylase</fullName>
        <ecNumber evidence="2">6.3.4.14</ecNumber>
    </recommendedName>
    <alternativeName>
        <fullName evidence="6">Acetyl-coenzyme A carboxylase biotin carboxylase subunit A</fullName>
    </alternativeName>
</protein>
<accession>O52058</accession>
<accession>D3RUH1</accession>
<feature type="chain" id="PRO_0000146790" description="Biotin carboxylase">
    <location>
        <begin position="1"/>
        <end position="449"/>
    </location>
</feature>
<feature type="domain" description="Biotin carboxylation">
    <location>
        <begin position="4"/>
        <end position="448"/>
    </location>
</feature>
<feature type="domain" description="ATP-grasp" evidence="4">
    <location>
        <begin position="123"/>
        <end position="320"/>
    </location>
</feature>
<feature type="active site" evidence="3">
    <location>
        <position position="295"/>
    </location>
</feature>
<feature type="binding site" evidence="3">
    <location>
        <position position="119"/>
    </location>
    <ligand>
        <name>ATP</name>
        <dbReference type="ChEBI" id="CHEBI:30616"/>
    </ligand>
</feature>
<feature type="binding site" evidence="3">
    <location>
        <position position="162"/>
    </location>
    <ligand>
        <name>ATP</name>
        <dbReference type="ChEBI" id="CHEBI:30616"/>
    </ligand>
</feature>
<feature type="binding site" evidence="3">
    <location>
        <begin position="168"/>
        <end position="169"/>
    </location>
    <ligand>
        <name>ATP</name>
        <dbReference type="ChEBI" id="CHEBI:30616"/>
    </ligand>
</feature>
<feature type="binding site" evidence="3">
    <location>
        <begin position="204"/>
        <end position="207"/>
    </location>
    <ligand>
        <name>ATP</name>
        <dbReference type="ChEBI" id="CHEBI:30616"/>
    </ligand>
</feature>
<feature type="binding site" evidence="3">
    <location>
        <position position="212"/>
    </location>
    <ligand>
        <name>ATP</name>
        <dbReference type="ChEBI" id="CHEBI:30616"/>
    </ligand>
</feature>
<feature type="binding site" evidence="3">
    <location>
        <position position="239"/>
    </location>
    <ligand>
        <name>ATP</name>
        <dbReference type="ChEBI" id="CHEBI:30616"/>
    </ligand>
</feature>
<feature type="binding site" evidence="3">
    <location>
        <position position="241"/>
    </location>
    <ligand>
        <name>hydrogencarbonate</name>
        <dbReference type="ChEBI" id="CHEBI:17544"/>
    </ligand>
</feature>
<feature type="binding site" evidence="3">
    <location>
        <position position="279"/>
    </location>
    <ligand>
        <name>ATP</name>
        <dbReference type="ChEBI" id="CHEBI:30616"/>
    </ligand>
</feature>
<feature type="binding site" evidence="5">
    <location>
        <position position="279"/>
    </location>
    <ligand>
        <name>Mg(2+)</name>
        <dbReference type="ChEBI" id="CHEBI:18420"/>
        <label>1</label>
    </ligand>
</feature>
<feature type="binding site" evidence="5">
    <location>
        <position position="279"/>
    </location>
    <ligand>
        <name>Mn(2+)</name>
        <dbReference type="ChEBI" id="CHEBI:29035"/>
        <label>1</label>
    </ligand>
</feature>
<feature type="binding site" evidence="3">
    <location>
        <position position="291"/>
    </location>
    <ligand>
        <name>ATP</name>
        <dbReference type="ChEBI" id="CHEBI:30616"/>
    </ligand>
</feature>
<feature type="binding site" evidence="5">
    <location>
        <position position="291"/>
    </location>
    <ligand>
        <name>Mg(2+)</name>
        <dbReference type="ChEBI" id="CHEBI:18420"/>
        <label>1</label>
    </ligand>
</feature>
<feature type="binding site" evidence="5">
    <location>
        <position position="291"/>
    </location>
    <ligand>
        <name>Mg(2+)</name>
        <dbReference type="ChEBI" id="CHEBI:18420"/>
        <label>2</label>
    </ligand>
</feature>
<feature type="binding site" evidence="5">
    <location>
        <position position="291"/>
    </location>
    <ligand>
        <name>Mn(2+)</name>
        <dbReference type="ChEBI" id="CHEBI:29035"/>
        <label>1</label>
    </ligand>
</feature>
<feature type="binding site" evidence="5">
    <location>
        <position position="291"/>
    </location>
    <ligand>
        <name>Mn(2+)</name>
        <dbReference type="ChEBI" id="CHEBI:29035"/>
        <label>2</label>
    </ligand>
</feature>
<feature type="binding site" evidence="5">
    <location>
        <position position="293"/>
    </location>
    <ligand>
        <name>Mg(2+)</name>
        <dbReference type="ChEBI" id="CHEBI:18420"/>
        <label>2</label>
    </ligand>
</feature>
<feature type="binding site" evidence="5">
    <location>
        <position position="293"/>
    </location>
    <ligand>
        <name>Mn(2+)</name>
        <dbReference type="ChEBI" id="CHEBI:29035"/>
        <label>2</label>
    </ligand>
</feature>
<feature type="binding site" evidence="3">
    <location>
        <position position="295"/>
    </location>
    <ligand>
        <name>hydrogencarbonate</name>
        <dbReference type="ChEBI" id="CHEBI:17544"/>
    </ligand>
</feature>
<feature type="binding site" evidence="3">
    <location>
        <position position="298"/>
    </location>
    <ligand>
        <name>hydrogencarbonate</name>
        <dbReference type="ChEBI" id="CHEBI:17544"/>
    </ligand>
</feature>
<feature type="binding site" evidence="3">
    <location>
        <position position="341"/>
    </location>
    <ligand>
        <name>biotin</name>
        <dbReference type="ChEBI" id="CHEBI:57586"/>
    </ligand>
</feature>
<feature type="binding site" evidence="3">
    <location>
        <position position="341"/>
    </location>
    <ligand>
        <name>hydrogencarbonate</name>
        <dbReference type="ChEBI" id="CHEBI:17544"/>
    </ligand>
</feature>
<feature type="sequence conflict" description="In Ref. 2; AAB91545." evidence="6" ref="2">
    <original>I</original>
    <variation>L</variation>
    <location>
        <position position="427"/>
    </location>
</feature>
<feature type="sequence conflict" description="In Ref. 2; AAB91545." evidence="6" ref="2">
    <location>
        <position position="437"/>
    </location>
</feature>